<accession>Q754H0</accession>
<reference key="1">
    <citation type="journal article" date="2004" name="Science">
        <title>The Ashbya gossypii genome as a tool for mapping the ancient Saccharomyces cerevisiae genome.</title>
        <authorList>
            <person name="Dietrich F.S."/>
            <person name="Voegeli S."/>
            <person name="Brachat S."/>
            <person name="Lerch A."/>
            <person name="Gates K."/>
            <person name="Steiner S."/>
            <person name="Mohr C."/>
            <person name="Poehlmann R."/>
            <person name="Luedi P."/>
            <person name="Choi S."/>
            <person name="Wing R.A."/>
            <person name="Flavier A."/>
            <person name="Gaffney T.D."/>
            <person name="Philippsen P."/>
        </authorList>
    </citation>
    <scope>NUCLEOTIDE SEQUENCE [LARGE SCALE GENOMIC DNA]</scope>
    <source>
        <strain>ATCC 10895 / CBS 109.51 / FGSC 9923 / NRRL Y-1056</strain>
    </source>
</reference>
<reference key="2">
    <citation type="journal article" date="2013" name="G3 (Bethesda)">
        <title>Genomes of Ashbya fungi isolated from insects reveal four mating-type loci, numerous translocations, lack of transposons, and distinct gene duplications.</title>
        <authorList>
            <person name="Dietrich F.S."/>
            <person name="Voegeli S."/>
            <person name="Kuo S."/>
            <person name="Philippsen P."/>
        </authorList>
    </citation>
    <scope>GENOME REANNOTATION</scope>
    <source>
        <strain>ATCC 10895 / CBS 109.51 / FGSC 9923 / NRRL Y-1056</strain>
    </source>
</reference>
<sequence>MPSIDVDEADILILSDGLKQVNELTREITGSLSKITSTTSKSSKLFAPIIETNTRLNVLKRNIESSFDSVSSIKDLASDASKYEIILEQEITQVGLRKFIKTLHKVDDIMDDLREKSKSTADFRGIVTHLEELTMIGEKNLQIYFANKLNQIQPFDPQVYMNKKQNFPYYYDEDLNDIAAILDYFGDTEQNPVTEIFMKQQGQLVLNSLAFLEPFTKQITSESNVPYQRGSSGFNSYTEAFITFVSGVSVLIDDVFVKLPDRRPAVFCKIVAPILHNYTKILRYNIDLVKDDINNYGLFSFELSENINRVHQLFKGKPLQNNEQLLECEAELKSISESLFKDLIQYIGQKTASLAQLPTDNGVTEATVDVMSRLRKFSEYKSGCLATIQSMTRESWLPNESKNVWTISMTPKNAQQLLSCFFSDAIDYLTISLERKAQKILNPNLEPEVGAPHKRIPQMQRIGFFVLTNITLIEQIVQRSEINTVLEDIGAARLVKLNARYVNYFASDWRDLASNLLDQVFVDSSGKISSKDKDQVKEKFRKFNEGFEQLVSNYKTCRITDPAMKKLLKQEIFALVAPMYERFHNRYKDSFKNPRKHIKYTPNELMNILNSLGR</sequence>
<organism>
    <name type="scientific">Eremothecium gossypii (strain ATCC 10895 / CBS 109.51 / FGSC 9923 / NRRL Y-1056)</name>
    <name type="common">Yeast</name>
    <name type="synonym">Ashbya gossypii</name>
    <dbReference type="NCBI Taxonomy" id="284811"/>
    <lineage>
        <taxon>Eukaryota</taxon>
        <taxon>Fungi</taxon>
        <taxon>Dikarya</taxon>
        <taxon>Ascomycota</taxon>
        <taxon>Saccharomycotina</taxon>
        <taxon>Saccharomycetes</taxon>
        <taxon>Saccharomycetales</taxon>
        <taxon>Saccharomycetaceae</taxon>
        <taxon>Eremothecium</taxon>
    </lineage>
</organism>
<dbReference type="EMBL" id="AE016819">
    <property type="protein sequence ID" value="AAS53471.1"/>
    <property type="molecule type" value="Genomic_DNA"/>
</dbReference>
<dbReference type="RefSeq" id="NP_985647.1">
    <property type="nucleotide sequence ID" value="NM_211001.2"/>
</dbReference>
<dbReference type="SMR" id="Q754H0"/>
<dbReference type="FunCoup" id="Q754H0">
    <property type="interactions" value="137"/>
</dbReference>
<dbReference type="STRING" id="284811.Q754H0"/>
<dbReference type="EnsemblFungi" id="AAS53471">
    <property type="protein sequence ID" value="AAS53471"/>
    <property type="gene ID" value="AGOS_AFR100W"/>
</dbReference>
<dbReference type="GeneID" id="4621890"/>
<dbReference type="KEGG" id="ago:AGOS_AFR100W"/>
<dbReference type="eggNOG" id="KOG2344">
    <property type="taxonomic scope" value="Eukaryota"/>
</dbReference>
<dbReference type="HOGENOM" id="CLU_010236_4_2_1"/>
<dbReference type="InParanoid" id="Q754H0"/>
<dbReference type="OMA" id="GIIRAGP"/>
<dbReference type="OrthoDB" id="1922221at2759"/>
<dbReference type="Proteomes" id="UP000000591">
    <property type="component" value="Chromosome VI"/>
</dbReference>
<dbReference type="GO" id="GO:0005935">
    <property type="term" value="C:cellular bud neck"/>
    <property type="evidence" value="ECO:0007669"/>
    <property type="project" value="UniProtKB-SubCell"/>
</dbReference>
<dbReference type="GO" id="GO:0005934">
    <property type="term" value="C:cellular bud tip"/>
    <property type="evidence" value="ECO:0007669"/>
    <property type="project" value="EnsemblFungi"/>
</dbReference>
<dbReference type="GO" id="GO:0000145">
    <property type="term" value="C:exocyst"/>
    <property type="evidence" value="ECO:0000318"/>
    <property type="project" value="GO_Central"/>
</dbReference>
<dbReference type="GO" id="GO:0000131">
    <property type="term" value="C:incipient cellular bud site"/>
    <property type="evidence" value="ECO:0007669"/>
    <property type="project" value="EnsemblFungi"/>
</dbReference>
<dbReference type="GO" id="GO:0005886">
    <property type="term" value="C:plasma membrane"/>
    <property type="evidence" value="ECO:0007669"/>
    <property type="project" value="EnsemblFungi"/>
</dbReference>
<dbReference type="GO" id="GO:0005546">
    <property type="term" value="F:phosphatidylinositol-4,5-bisphosphate binding"/>
    <property type="evidence" value="ECO:0007669"/>
    <property type="project" value="EnsemblFungi"/>
</dbReference>
<dbReference type="GO" id="GO:0031267">
    <property type="term" value="F:small GTPase binding"/>
    <property type="evidence" value="ECO:0007669"/>
    <property type="project" value="EnsemblFungi"/>
</dbReference>
<dbReference type="GO" id="GO:0001927">
    <property type="term" value="P:exocyst assembly"/>
    <property type="evidence" value="ECO:0007669"/>
    <property type="project" value="EnsemblFungi"/>
</dbReference>
<dbReference type="GO" id="GO:0051601">
    <property type="term" value="P:exocyst localization"/>
    <property type="evidence" value="ECO:0007669"/>
    <property type="project" value="EnsemblFungi"/>
</dbReference>
<dbReference type="GO" id="GO:0006887">
    <property type="term" value="P:exocytosis"/>
    <property type="evidence" value="ECO:0000318"/>
    <property type="project" value="GO_Central"/>
</dbReference>
<dbReference type="GO" id="GO:0006893">
    <property type="term" value="P:Golgi to plasma membrane transport"/>
    <property type="evidence" value="ECO:0007669"/>
    <property type="project" value="EnsemblFungi"/>
</dbReference>
<dbReference type="GO" id="GO:0015031">
    <property type="term" value="P:protein transport"/>
    <property type="evidence" value="ECO:0007669"/>
    <property type="project" value="UniProtKB-KW"/>
</dbReference>
<dbReference type="GO" id="GO:0007266">
    <property type="term" value="P:Rho protein signal transduction"/>
    <property type="evidence" value="ECO:0007669"/>
    <property type="project" value="EnsemblFungi"/>
</dbReference>
<dbReference type="Gene3D" id="1.10.357.60">
    <property type="match status" value="1"/>
</dbReference>
<dbReference type="Gene3D" id="1.20.1310.30">
    <property type="match status" value="1"/>
</dbReference>
<dbReference type="Gene3D" id="1.20.58.1150">
    <property type="match status" value="1"/>
</dbReference>
<dbReference type="Gene3D" id="1.20.1280.170">
    <property type="entry name" value="Exocyst complex component Exo70"/>
    <property type="match status" value="1"/>
</dbReference>
<dbReference type="InterPro" id="IPR016159">
    <property type="entry name" value="Cullin_repeat-like_dom_sf"/>
</dbReference>
<dbReference type="InterPro" id="IPR004140">
    <property type="entry name" value="Exo70"/>
</dbReference>
<dbReference type="InterPro" id="IPR046364">
    <property type="entry name" value="Exo70_C"/>
</dbReference>
<dbReference type="PANTHER" id="PTHR12542:SF41">
    <property type="entry name" value="EXOCYST COMPLEX COMPONENT 7"/>
    <property type="match status" value="1"/>
</dbReference>
<dbReference type="PANTHER" id="PTHR12542">
    <property type="entry name" value="EXOCYST COMPLEX PROTEIN EXO70"/>
    <property type="match status" value="1"/>
</dbReference>
<dbReference type="Pfam" id="PF03081">
    <property type="entry name" value="Exo70_C"/>
    <property type="match status" value="1"/>
</dbReference>
<dbReference type="Pfam" id="PF20669">
    <property type="entry name" value="Exo70_N"/>
    <property type="match status" value="1"/>
</dbReference>
<dbReference type="SUPFAM" id="SSF74788">
    <property type="entry name" value="Cullin repeat-like"/>
    <property type="match status" value="1"/>
</dbReference>
<feature type="chain" id="PRO_0000118964" description="Exocyst complex protein EXO70">
    <location>
        <begin position="1"/>
        <end position="614"/>
    </location>
</feature>
<protein>
    <recommendedName>
        <fullName>Exocyst complex protein EXO70</fullName>
    </recommendedName>
</protein>
<evidence type="ECO:0000250" key="1"/>
<evidence type="ECO:0000305" key="2"/>
<name>EXO70_EREGS</name>
<comment type="function">
    <text evidence="1">Involved in the secretory pathway as part of the exocyst complex which tethers secretory vesicles to the sites of exocytosis. Also plays a role in the assembly of the exocyst (By similarity).</text>
</comment>
<comment type="subcellular location">
    <subcellularLocation>
        <location evidence="1">Bud</location>
    </subcellularLocation>
    <subcellularLocation>
        <location evidence="1">Bud neck</location>
    </subcellularLocation>
</comment>
<comment type="similarity">
    <text evidence="2">Belongs to the EXO70 family.</text>
</comment>
<keyword id="KW-0268">Exocytosis</keyword>
<keyword id="KW-0653">Protein transport</keyword>
<keyword id="KW-1185">Reference proteome</keyword>
<keyword id="KW-0813">Transport</keyword>
<proteinExistence type="inferred from homology"/>
<gene>
    <name type="primary">EXO70</name>
    <name type="ordered locus">AFR100W</name>
</gene>